<feature type="chain" id="PRO_1000022769" description="Trigger factor">
    <location>
        <begin position="1"/>
        <end position="427"/>
    </location>
</feature>
<feature type="domain" description="PPIase FKBP-type" evidence="1">
    <location>
        <begin position="163"/>
        <end position="248"/>
    </location>
</feature>
<protein>
    <recommendedName>
        <fullName evidence="1">Trigger factor</fullName>
        <shortName evidence="1">TF</shortName>
        <ecNumber evidence="1">5.2.1.8</ecNumber>
    </recommendedName>
    <alternativeName>
        <fullName evidence="1">PPIase</fullName>
    </alternativeName>
</protein>
<organism>
    <name type="scientific">Streptococcus sanguinis (strain SK36)</name>
    <dbReference type="NCBI Taxonomy" id="388919"/>
    <lineage>
        <taxon>Bacteria</taxon>
        <taxon>Bacillati</taxon>
        <taxon>Bacillota</taxon>
        <taxon>Bacilli</taxon>
        <taxon>Lactobacillales</taxon>
        <taxon>Streptococcaceae</taxon>
        <taxon>Streptococcus</taxon>
    </lineage>
</organism>
<comment type="function">
    <text evidence="1">Involved in protein export. Acts as a chaperone by maintaining the newly synthesized protein in an open conformation. Functions as a peptidyl-prolyl cis-trans isomerase.</text>
</comment>
<comment type="catalytic activity">
    <reaction evidence="1">
        <text>[protein]-peptidylproline (omega=180) = [protein]-peptidylproline (omega=0)</text>
        <dbReference type="Rhea" id="RHEA:16237"/>
        <dbReference type="Rhea" id="RHEA-COMP:10747"/>
        <dbReference type="Rhea" id="RHEA-COMP:10748"/>
        <dbReference type="ChEBI" id="CHEBI:83833"/>
        <dbReference type="ChEBI" id="CHEBI:83834"/>
        <dbReference type="EC" id="5.2.1.8"/>
    </reaction>
</comment>
<comment type="subcellular location">
    <subcellularLocation>
        <location>Cytoplasm</location>
    </subcellularLocation>
    <text evidence="1">About half TF is bound to the ribosome near the polypeptide exit tunnel while the other half is free in the cytoplasm.</text>
</comment>
<comment type="domain">
    <text evidence="1">Consists of 3 domains; the N-terminus binds the ribosome, the middle domain has PPIase activity, while the C-terminus has intrinsic chaperone activity on its own.</text>
</comment>
<comment type="similarity">
    <text evidence="1">Belongs to the FKBP-type PPIase family. Tig subfamily.</text>
</comment>
<sequence length="427" mass="47208">MSVSFENKETNRGLLTFSISQEKIKPALDRVFNSVKKDIAVPGFRKGRLPRAIFNQRFGEEALYQDALNALLPEAYEAAVKEAGIEVVAQPQFDVESMEKGQDWVIKAEVVTKPEVKLGAYKDLEVTVEATKEVTDAEVDERIERERNNLAELVLKEGPAADGDTVVIDFVGSVDGVEFDGGKGDNFSLGLGSGQFIPGFEEQLVGHSAGETVDVVVTFPEDYQAEDLAGKEAKFVTTIHEVKEKEVPALDDELAKDIDEEVETLDELKEKYRKELSEAKETAYKDAVEAAAIDQAVANAEIVDLPAEMVHEEVHRAVNEFLGNMQRQGISPDMYFQITGTTQEDLHKQYEADAESRTKTNLVVEAVAKAEGFEASAEEIEAEVTSLASDYNMEVERVRQLLSEDMLKHDIAIKKAVELITSTAKVK</sequence>
<reference key="1">
    <citation type="journal article" date="2007" name="J. Bacteriol.">
        <title>Genome of the opportunistic pathogen Streptococcus sanguinis.</title>
        <authorList>
            <person name="Xu P."/>
            <person name="Alves J.M."/>
            <person name="Kitten T."/>
            <person name="Brown A."/>
            <person name="Chen Z."/>
            <person name="Ozaki L.S."/>
            <person name="Manque P."/>
            <person name="Ge X."/>
            <person name="Serrano M.G."/>
            <person name="Puiu D."/>
            <person name="Hendricks S."/>
            <person name="Wang Y."/>
            <person name="Chaplin M.D."/>
            <person name="Akan D."/>
            <person name="Paik S."/>
            <person name="Peterson D.L."/>
            <person name="Macrina F.L."/>
            <person name="Buck G.A."/>
        </authorList>
    </citation>
    <scope>NUCLEOTIDE SEQUENCE [LARGE SCALE GENOMIC DNA]</scope>
    <source>
        <strain>SK36</strain>
    </source>
</reference>
<keyword id="KW-0131">Cell cycle</keyword>
<keyword id="KW-0132">Cell division</keyword>
<keyword id="KW-0143">Chaperone</keyword>
<keyword id="KW-0963">Cytoplasm</keyword>
<keyword id="KW-0413">Isomerase</keyword>
<keyword id="KW-1185">Reference proteome</keyword>
<keyword id="KW-0697">Rotamase</keyword>
<dbReference type="EC" id="5.2.1.8" evidence="1"/>
<dbReference type="EMBL" id="CP000387">
    <property type="protein sequence ID" value="ABN45369.1"/>
    <property type="molecule type" value="Genomic_DNA"/>
</dbReference>
<dbReference type="RefSeq" id="WP_011837486.1">
    <property type="nucleotide sequence ID" value="NC_009009.1"/>
</dbReference>
<dbReference type="RefSeq" id="YP_001035919.1">
    <property type="nucleotide sequence ID" value="NC_009009.1"/>
</dbReference>
<dbReference type="SMR" id="A3CQB4"/>
<dbReference type="STRING" id="388919.SSA_1998"/>
<dbReference type="KEGG" id="ssa:SSA_1998"/>
<dbReference type="PATRIC" id="fig|388919.9.peg.1894"/>
<dbReference type="eggNOG" id="COG0544">
    <property type="taxonomic scope" value="Bacteria"/>
</dbReference>
<dbReference type="HOGENOM" id="CLU_033058_3_2_9"/>
<dbReference type="OrthoDB" id="9767721at2"/>
<dbReference type="Proteomes" id="UP000002148">
    <property type="component" value="Chromosome"/>
</dbReference>
<dbReference type="GO" id="GO:0005737">
    <property type="term" value="C:cytoplasm"/>
    <property type="evidence" value="ECO:0007669"/>
    <property type="project" value="UniProtKB-SubCell"/>
</dbReference>
<dbReference type="GO" id="GO:0003755">
    <property type="term" value="F:peptidyl-prolyl cis-trans isomerase activity"/>
    <property type="evidence" value="ECO:0007669"/>
    <property type="project" value="UniProtKB-UniRule"/>
</dbReference>
<dbReference type="GO" id="GO:0044183">
    <property type="term" value="F:protein folding chaperone"/>
    <property type="evidence" value="ECO:0007669"/>
    <property type="project" value="TreeGrafter"/>
</dbReference>
<dbReference type="GO" id="GO:0043022">
    <property type="term" value="F:ribosome binding"/>
    <property type="evidence" value="ECO:0007669"/>
    <property type="project" value="TreeGrafter"/>
</dbReference>
<dbReference type="GO" id="GO:0051083">
    <property type="term" value="P:'de novo' cotranslational protein folding"/>
    <property type="evidence" value="ECO:0007669"/>
    <property type="project" value="TreeGrafter"/>
</dbReference>
<dbReference type="GO" id="GO:0051301">
    <property type="term" value="P:cell division"/>
    <property type="evidence" value="ECO:0007669"/>
    <property type="project" value="UniProtKB-KW"/>
</dbReference>
<dbReference type="GO" id="GO:0061077">
    <property type="term" value="P:chaperone-mediated protein folding"/>
    <property type="evidence" value="ECO:0007669"/>
    <property type="project" value="TreeGrafter"/>
</dbReference>
<dbReference type="GO" id="GO:0015031">
    <property type="term" value="P:protein transport"/>
    <property type="evidence" value="ECO:0007669"/>
    <property type="project" value="UniProtKB-UniRule"/>
</dbReference>
<dbReference type="GO" id="GO:0043335">
    <property type="term" value="P:protein unfolding"/>
    <property type="evidence" value="ECO:0007669"/>
    <property type="project" value="TreeGrafter"/>
</dbReference>
<dbReference type="FunFam" id="3.10.50.40:FF:000001">
    <property type="entry name" value="Trigger factor"/>
    <property type="match status" value="1"/>
</dbReference>
<dbReference type="Gene3D" id="3.10.50.40">
    <property type="match status" value="1"/>
</dbReference>
<dbReference type="Gene3D" id="3.30.70.1050">
    <property type="entry name" value="Trigger factor ribosome-binding domain"/>
    <property type="match status" value="1"/>
</dbReference>
<dbReference type="Gene3D" id="1.10.3120.10">
    <property type="entry name" value="Trigger factor, C-terminal domain"/>
    <property type="match status" value="1"/>
</dbReference>
<dbReference type="HAMAP" id="MF_00303">
    <property type="entry name" value="Trigger_factor_Tig"/>
    <property type="match status" value="1"/>
</dbReference>
<dbReference type="InterPro" id="IPR046357">
    <property type="entry name" value="PPIase_dom_sf"/>
</dbReference>
<dbReference type="InterPro" id="IPR001179">
    <property type="entry name" value="PPIase_FKBP_dom"/>
</dbReference>
<dbReference type="InterPro" id="IPR005215">
    <property type="entry name" value="Trig_fac"/>
</dbReference>
<dbReference type="InterPro" id="IPR008880">
    <property type="entry name" value="Trigger_fac_C"/>
</dbReference>
<dbReference type="InterPro" id="IPR037041">
    <property type="entry name" value="Trigger_fac_C_sf"/>
</dbReference>
<dbReference type="InterPro" id="IPR008881">
    <property type="entry name" value="Trigger_fac_ribosome-bd_bac"/>
</dbReference>
<dbReference type="InterPro" id="IPR036611">
    <property type="entry name" value="Trigger_fac_ribosome-bd_sf"/>
</dbReference>
<dbReference type="InterPro" id="IPR027304">
    <property type="entry name" value="Trigger_fact/SurA_dom_sf"/>
</dbReference>
<dbReference type="NCBIfam" id="TIGR00115">
    <property type="entry name" value="tig"/>
    <property type="match status" value="1"/>
</dbReference>
<dbReference type="PANTHER" id="PTHR30560">
    <property type="entry name" value="TRIGGER FACTOR CHAPERONE AND PEPTIDYL-PROLYL CIS/TRANS ISOMERASE"/>
    <property type="match status" value="1"/>
</dbReference>
<dbReference type="PANTHER" id="PTHR30560:SF3">
    <property type="entry name" value="TRIGGER FACTOR-LIKE PROTEIN TIG, CHLOROPLASTIC"/>
    <property type="match status" value="1"/>
</dbReference>
<dbReference type="Pfam" id="PF00254">
    <property type="entry name" value="FKBP_C"/>
    <property type="match status" value="1"/>
</dbReference>
<dbReference type="Pfam" id="PF05698">
    <property type="entry name" value="Trigger_C"/>
    <property type="match status" value="1"/>
</dbReference>
<dbReference type="Pfam" id="PF05697">
    <property type="entry name" value="Trigger_N"/>
    <property type="match status" value="1"/>
</dbReference>
<dbReference type="PIRSF" id="PIRSF003095">
    <property type="entry name" value="Trigger_factor"/>
    <property type="match status" value="1"/>
</dbReference>
<dbReference type="SUPFAM" id="SSF54534">
    <property type="entry name" value="FKBP-like"/>
    <property type="match status" value="1"/>
</dbReference>
<dbReference type="SUPFAM" id="SSF109998">
    <property type="entry name" value="Triger factor/SurA peptide-binding domain-like"/>
    <property type="match status" value="1"/>
</dbReference>
<dbReference type="SUPFAM" id="SSF102735">
    <property type="entry name" value="Trigger factor ribosome-binding domain"/>
    <property type="match status" value="1"/>
</dbReference>
<dbReference type="PROSITE" id="PS50059">
    <property type="entry name" value="FKBP_PPIASE"/>
    <property type="match status" value="1"/>
</dbReference>
<name>TIG_STRSV</name>
<accession>A3CQB4</accession>
<proteinExistence type="inferred from homology"/>
<evidence type="ECO:0000255" key="1">
    <source>
        <dbReference type="HAMAP-Rule" id="MF_00303"/>
    </source>
</evidence>
<gene>
    <name evidence="1" type="primary">tig</name>
    <name type="ordered locus">SSA_1998</name>
</gene>